<gene>
    <name evidence="1" type="primary">panB</name>
    <name type="ordered locus">RC1_3500</name>
</gene>
<accession>B6IX34</accession>
<protein>
    <recommendedName>
        <fullName evidence="1">3-methyl-2-oxobutanoate hydroxymethyltransferase</fullName>
        <ecNumber evidence="1">2.1.2.11</ecNumber>
    </recommendedName>
    <alternativeName>
        <fullName evidence="1">Ketopantoate hydroxymethyltransferase</fullName>
        <shortName evidence="1">KPHMT</shortName>
    </alternativeName>
</protein>
<feature type="chain" id="PRO_1000096996" description="3-methyl-2-oxobutanoate hydroxymethyltransferase">
    <location>
        <begin position="1"/>
        <end position="275"/>
    </location>
</feature>
<feature type="active site" description="Proton acceptor" evidence="1">
    <location>
        <position position="187"/>
    </location>
</feature>
<feature type="binding site" evidence="1">
    <location>
        <begin position="49"/>
        <end position="50"/>
    </location>
    <ligand>
        <name>3-methyl-2-oxobutanoate</name>
        <dbReference type="ChEBI" id="CHEBI:11851"/>
    </ligand>
</feature>
<feature type="binding site" evidence="1">
    <location>
        <position position="49"/>
    </location>
    <ligand>
        <name>Mg(2+)</name>
        <dbReference type="ChEBI" id="CHEBI:18420"/>
    </ligand>
</feature>
<feature type="binding site" evidence="1">
    <location>
        <position position="88"/>
    </location>
    <ligand>
        <name>3-methyl-2-oxobutanoate</name>
        <dbReference type="ChEBI" id="CHEBI:11851"/>
    </ligand>
</feature>
<feature type="binding site" evidence="1">
    <location>
        <position position="88"/>
    </location>
    <ligand>
        <name>Mg(2+)</name>
        <dbReference type="ChEBI" id="CHEBI:18420"/>
    </ligand>
</feature>
<feature type="binding site" evidence="1">
    <location>
        <position position="118"/>
    </location>
    <ligand>
        <name>3-methyl-2-oxobutanoate</name>
        <dbReference type="ChEBI" id="CHEBI:11851"/>
    </ligand>
</feature>
<feature type="binding site" evidence="1">
    <location>
        <position position="120"/>
    </location>
    <ligand>
        <name>Mg(2+)</name>
        <dbReference type="ChEBI" id="CHEBI:18420"/>
    </ligand>
</feature>
<sequence length="275" mass="28841">MSATGQSKRLAVPDIAARKGREPVAVLTAYTVSMARLLDPHVEVLLVGDSLGMVLYGFDSTLPVTLDMMIAHGAAVVRGSSRACVVVDMPWASYQEGREQAFRNAARILAETGCAAVKLEGGEEMAETVDFLVRRGIPVMGHVGLTPQAVNALGGYRARGRSDAEQAKILGDARAVAEAGAFALVVEGVVEPLARAVTEAVPCVTIGIGASAACDGQVLVSDDLLGLYGAFTPKFVRRYAELGPVIEEAAATYAADVRARRFPGTEHVFAARKAS</sequence>
<proteinExistence type="inferred from homology"/>
<keyword id="KW-0963">Cytoplasm</keyword>
<keyword id="KW-0460">Magnesium</keyword>
<keyword id="KW-0479">Metal-binding</keyword>
<keyword id="KW-0566">Pantothenate biosynthesis</keyword>
<keyword id="KW-1185">Reference proteome</keyword>
<keyword id="KW-0808">Transferase</keyword>
<name>PANB_RHOCS</name>
<evidence type="ECO:0000255" key="1">
    <source>
        <dbReference type="HAMAP-Rule" id="MF_00156"/>
    </source>
</evidence>
<reference key="1">
    <citation type="submission" date="2007-03" db="EMBL/GenBank/DDBJ databases">
        <title>Genome sequence of Rhodospirillum centenum.</title>
        <authorList>
            <person name="Touchman J.W."/>
            <person name="Bauer C."/>
            <person name="Blankenship R.E."/>
        </authorList>
    </citation>
    <scope>NUCLEOTIDE SEQUENCE [LARGE SCALE GENOMIC DNA]</scope>
    <source>
        <strain>ATCC 51521 / SW</strain>
    </source>
</reference>
<dbReference type="EC" id="2.1.2.11" evidence="1"/>
<dbReference type="EMBL" id="CP000613">
    <property type="protein sequence ID" value="ACJ00858.1"/>
    <property type="molecule type" value="Genomic_DNA"/>
</dbReference>
<dbReference type="RefSeq" id="WP_012568636.1">
    <property type="nucleotide sequence ID" value="NC_011420.2"/>
</dbReference>
<dbReference type="SMR" id="B6IX34"/>
<dbReference type="STRING" id="414684.RC1_3500"/>
<dbReference type="KEGG" id="rce:RC1_3500"/>
<dbReference type="eggNOG" id="COG0413">
    <property type="taxonomic scope" value="Bacteria"/>
</dbReference>
<dbReference type="HOGENOM" id="CLU_036645_1_0_5"/>
<dbReference type="OrthoDB" id="9781789at2"/>
<dbReference type="UniPathway" id="UPA00028">
    <property type="reaction ID" value="UER00003"/>
</dbReference>
<dbReference type="Proteomes" id="UP000001591">
    <property type="component" value="Chromosome"/>
</dbReference>
<dbReference type="GO" id="GO:0005737">
    <property type="term" value="C:cytoplasm"/>
    <property type="evidence" value="ECO:0007669"/>
    <property type="project" value="UniProtKB-SubCell"/>
</dbReference>
<dbReference type="GO" id="GO:0003864">
    <property type="term" value="F:3-methyl-2-oxobutanoate hydroxymethyltransferase activity"/>
    <property type="evidence" value="ECO:0007669"/>
    <property type="project" value="UniProtKB-UniRule"/>
</dbReference>
<dbReference type="GO" id="GO:0000287">
    <property type="term" value="F:magnesium ion binding"/>
    <property type="evidence" value="ECO:0007669"/>
    <property type="project" value="TreeGrafter"/>
</dbReference>
<dbReference type="GO" id="GO:0015940">
    <property type="term" value="P:pantothenate biosynthetic process"/>
    <property type="evidence" value="ECO:0007669"/>
    <property type="project" value="UniProtKB-UniRule"/>
</dbReference>
<dbReference type="CDD" id="cd06557">
    <property type="entry name" value="KPHMT-like"/>
    <property type="match status" value="1"/>
</dbReference>
<dbReference type="FunFam" id="3.20.20.60:FF:000003">
    <property type="entry name" value="3-methyl-2-oxobutanoate hydroxymethyltransferase"/>
    <property type="match status" value="1"/>
</dbReference>
<dbReference type="Gene3D" id="3.20.20.60">
    <property type="entry name" value="Phosphoenolpyruvate-binding domains"/>
    <property type="match status" value="1"/>
</dbReference>
<dbReference type="HAMAP" id="MF_00156">
    <property type="entry name" value="PanB"/>
    <property type="match status" value="1"/>
</dbReference>
<dbReference type="InterPro" id="IPR003700">
    <property type="entry name" value="Pantoate_hydroxy_MeTrfase"/>
</dbReference>
<dbReference type="InterPro" id="IPR015813">
    <property type="entry name" value="Pyrv/PenolPyrv_kinase-like_dom"/>
</dbReference>
<dbReference type="InterPro" id="IPR040442">
    <property type="entry name" value="Pyrv_kinase-like_dom_sf"/>
</dbReference>
<dbReference type="NCBIfam" id="TIGR00222">
    <property type="entry name" value="panB"/>
    <property type="match status" value="1"/>
</dbReference>
<dbReference type="NCBIfam" id="NF001452">
    <property type="entry name" value="PRK00311.1"/>
    <property type="match status" value="1"/>
</dbReference>
<dbReference type="PANTHER" id="PTHR20881">
    <property type="entry name" value="3-METHYL-2-OXOBUTANOATE HYDROXYMETHYLTRANSFERASE"/>
    <property type="match status" value="1"/>
</dbReference>
<dbReference type="PANTHER" id="PTHR20881:SF0">
    <property type="entry name" value="3-METHYL-2-OXOBUTANOATE HYDROXYMETHYLTRANSFERASE"/>
    <property type="match status" value="1"/>
</dbReference>
<dbReference type="Pfam" id="PF02548">
    <property type="entry name" value="Pantoate_transf"/>
    <property type="match status" value="1"/>
</dbReference>
<dbReference type="PIRSF" id="PIRSF000388">
    <property type="entry name" value="Pantoate_hydroxy_MeTrfase"/>
    <property type="match status" value="1"/>
</dbReference>
<dbReference type="SUPFAM" id="SSF51621">
    <property type="entry name" value="Phosphoenolpyruvate/pyruvate domain"/>
    <property type="match status" value="1"/>
</dbReference>
<organism>
    <name type="scientific">Rhodospirillum centenum (strain ATCC 51521 / SW)</name>
    <dbReference type="NCBI Taxonomy" id="414684"/>
    <lineage>
        <taxon>Bacteria</taxon>
        <taxon>Pseudomonadati</taxon>
        <taxon>Pseudomonadota</taxon>
        <taxon>Alphaproteobacteria</taxon>
        <taxon>Rhodospirillales</taxon>
        <taxon>Rhodospirillaceae</taxon>
        <taxon>Rhodospirillum</taxon>
    </lineage>
</organism>
<comment type="function">
    <text evidence="1">Catalyzes the reversible reaction in which hydroxymethyl group from 5,10-methylenetetrahydrofolate is transferred onto alpha-ketoisovalerate to form ketopantoate.</text>
</comment>
<comment type="catalytic activity">
    <reaction evidence="1">
        <text>3-methyl-2-oxobutanoate + (6R)-5,10-methylene-5,6,7,8-tetrahydrofolate + H2O = 2-dehydropantoate + (6S)-5,6,7,8-tetrahydrofolate</text>
        <dbReference type="Rhea" id="RHEA:11824"/>
        <dbReference type="ChEBI" id="CHEBI:11561"/>
        <dbReference type="ChEBI" id="CHEBI:11851"/>
        <dbReference type="ChEBI" id="CHEBI:15377"/>
        <dbReference type="ChEBI" id="CHEBI:15636"/>
        <dbReference type="ChEBI" id="CHEBI:57453"/>
        <dbReference type="EC" id="2.1.2.11"/>
    </reaction>
</comment>
<comment type="cofactor">
    <cofactor evidence="1">
        <name>Mg(2+)</name>
        <dbReference type="ChEBI" id="CHEBI:18420"/>
    </cofactor>
    <text evidence="1">Binds 1 Mg(2+) ion per subunit.</text>
</comment>
<comment type="pathway">
    <text evidence="1">Cofactor biosynthesis; (R)-pantothenate biosynthesis; (R)-pantoate from 3-methyl-2-oxobutanoate: step 1/2.</text>
</comment>
<comment type="subunit">
    <text evidence="1">Homodecamer; pentamer of dimers.</text>
</comment>
<comment type="subcellular location">
    <subcellularLocation>
        <location evidence="1">Cytoplasm</location>
    </subcellularLocation>
</comment>
<comment type="similarity">
    <text evidence="1">Belongs to the PanB family.</text>
</comment>